<accession>P25571</accession>
<sequence length="164" mass="19050">MRGASAASKIFFFSIFVVIVISRFLFFLIFSERQTFRNTCPENYPGLHVIICYPVGRRLFFPFLSLVSFSNLPPCSILLCCYNHNKTKNPYGHTYIYIYIYIFCYACIFLLQAACLIGNFKAAKLYIKKNIHLSRYEVFCWCRPVMVLPAARLLCFRPTRGCGP</sequence>
<comment type="miscellaneous">
    <text evidence="1">Partially overlaps PDI1.</text>
</comment>
<comment type="caution">
    <text evidence="2">Product of a dubious gene prediction unlikely to encode a functional protein. Because of that it is not part of the S.cerevisiae S288c complete/reference proteome set.</text>
</comment>
<feature type="chain" id="PRO_0000202544" description="Putative uncharacterized protein YCL041C">
    <location>
        <begin position="1"/>
        <end position="164"/>
    </location>
</feature>
<protein>
    <recommendedName>
        <fullName>Putative uncharacterized protein YCL041C</fullName>
    </recommendedName>
</protein>
<organism>
    <name type="scientific">Saccharomyces cerevisiae (strain ATCC 204508 / S288c)</name>
    <name type="common">Baker's yeast</name>
    <dbReference type="NCBI Taxonomy" id="559292"/>
    <lineage>
        <taxon>Eukaryota</taxon>
        <taxon>Fungi</taxon>
        <taxon>Dikarya</taxon>
        <taxon>Ascomycota</taxon>
        <taxon>Saccharomycotina</taxon>
        <taxon>Saccharomycetes</taxon>
        <taxon>Saccharomycetales</taxon>
        <taxon>Saccharomycetaceae</taxon>
        <taxon>Saccharomyces</taxon>
    </lineage>
</organism>
<name>YCE1_YEAST</name>
<gene>
    <name type="ordered locus">YCL041C</name>
    <name type="ORF">YCL41C</name>
</gene>
<dbReference type="EMBL" id="X59720">
    <property type="protein sequence ID" value="CAA42374.1"/>
    <property type="molecule type" value="Genomic_DNA"/>
</dbReference>
<dbReference type="PIR" id="S19370">
    <property type="entry name" value="S19370"/>
</dbReference>
<dbReference type="SMR" id="P25571"/>
<dbReference type="PaxDb" id="4932-YCL041C"/>
<dbReference type="EnsemblFungi" id="YCL041C_mRNA">
    <property type="protein sequence ID" value="YCL041C"/>
    <property type="gene ID" value="YCL041C"/>
</dbReference>
<dbReference type="AGR" id="SGD:S000000546"/>
<dbReference type="SGD" id="S000000546">
    <property type="gene designation" value="YCL041C"/>
</dbReference>
<dbReference type="HOGENOM" id="CLU_1645053_0_0_1"/>
<dbReference type="ChiTaRS" id="YCL041C">
    <property type="organism name" value="yeast"/>
</dbReference>
<reference key="1">
    <citation type="journal article" date="1992" name="Nature">
        <title>The complete DNA sequence of yeast chromosome III.</title>
        <authorList>
            <person name="Oliver S.G."/>
            <person name="van der Aart Q.J.M."/>
            <person name="Agostoni-Carbone M.L."/>
            <person name="Aigle M."/>
            <person name="Alberghina L."/>
            <person name="Alexandraki D."/>
            <person name="Antoine G."/>
            <person name="Anwar R."/>
            <person name="Ballesta J.P.G."/>
            <person name="Benit P."/>
            <person name="Berben G."/>
            <person name="Bergantino E."/>
            <person name="Biteau N."/>
            <person name="Bolle P.-A."/>
            <person name="Bolotin-Fukuhara M."/>
            <person name="Brown A."/>
            <person name="Brown A.J.P."/>
            <person name="Buhler J.-M."/>
            <person name="Carcano C."/>
            <person name="Carignani G."/>
            <person name="Cederberg H."/>
            <person name="Chanet R."/>
            <person name="Contreras R."/>
            <person name="Crouzet M."/>
            <person name="Daignan-Fornier B."/>
            <person name="Defoor E."/>
            <person name="Delgado M.D."/>
            <person name="Demolder J."/>
            <person name="Doira C."/>
            <person name="Dubois E."/>
            <person name="Dujon B."/>
            <person name="Duesterhoeft A."/>
            <person name="Erdmann D."/>
            <person name="Esteban M."/>
            <person name="Fabre F."/>
            <person name="Fairhead C."/>
            <person name="Faye G."/>
            <person name="Feldmann H."/>
            <person name="Fiers W."/>
            <person name="Francingues-Gaillard M.-C."/>
            <person name="Franco L."/>
            <person name="Frontali L."/>
            <person name="Fukuhara H."/>
            <person name="Fuller L.J."/>
            <person name="Galland P."/>
            <person name="Gent M.E."/>
            <person name="Gigot D."/>
            <person name="Gilliquet V."/>
            <person name="Glansdorff N."/>
            <person name="Goffeau A."/>
            <person name="Grenson M."/>
            <person name="Grisanti P."/>
            <person name="Grivell L.A."/>
            <person name="de Haan M."/>
            <person name="Haasemann M."/>
            <person name="Hatat D."/>
            <person name="Hoenicka J."/>
            <person name="Hegemann J.H."/>
            <person name="Herbert C.J."/>
            <person name="Hilger F."/>
            <person name="Hohmann S."/>
            <person name="Hollenberg C.P."/>
            <person name="Huse K."/>
            <person name="Iborra F."/>
            <person name="Indge K.J."/>
            <person name="Isono K."/>
            <person name="Jacq C."/>
            <person name="Jacquet M."/>
            <person name="James C.M."/>
            <person name="Jauniaux J.-C."/>
            <person name="Jia Y."/>
            <person name="Jimenez A."/>
            <person name="Kelly A."/>
            <person name="Kleinhans U."/>
            <person name="Kreisl P."/>
            <person name="Lanfranchi G."/>
            <person name="Lewis C."/>
            <person name="van der Linden C.G."/>
            <person name="Lucchini G."/>
            <person name="Lutzenkirchen K."/>
            <person name="Maat M.J."/>
            <person name="Mallet L."/>
            <person name="Mannhaupt G."/>
            <person name="Martegani E."/>
            <person name="Mathieu A."/>
            <person name="Maurer C.T.C."/>
            <person name="McConnell D."/>
            <person name="McKee R.A."/>
            <person name="Messenguy F."/>
            <person name="Mewes H.-W."/>
            <person name="Molemans F."/>
            <person name="Montague M.A."/>
            <person name="Muzi Falconi M."/>
            <person name="Navas L."/>
            <person name="Newlon C.S."/>
            <person name="Noone D."/>
            <person name="Pallier C."/>
            <person name="Panzeri L."/>
            <person name="Pearson B.M."/>
            <person name="Perea J."/>
            <person name="Philippsen P."/>
            <person name="Pierard A."/>
            <person name="Planta R.J."/>
            <person name="Plevani P."/>
            <person name="Poetsch B."/>
            <person name="Pohl F.M."/>
            <person name="Purnelle B."/>
            <person name="Ramezani Rad M."/>
            <person name="Rasmussen S.W."/>
            <person name="Raynal A."/>
            <person name="Remacha M.A."/>
            <person name="Richterich P."/>
            <person name="Roberts A.B."/>
            <person name="Rodriguez F."/>
            <person name="Sanz E."/>
            <person name="Schaaff-Gerstenschlaeger I."/>
            <person name="Scherens B."/>
            <person name="Schweitzer B."/>
            <person name="Shu Y."/>
            <person name="Skala J."/>
            <person name="Slonimski P.P."/>
            <person name="Sor F."/>
            <person name="Soustelle C."/>
            <person name="Spiegelberg R."/>
            <person name="Stateva L.I."/>
            <person name="Steensma H.Y."/>
            <person name="Steiner S."/>
            <person name="Thierry A."/>
            <person name="Thireos G."/>
            <person name="Tzermia M."/>
            <person name="Urrestarazu L.A."/>
            <person name="Valle G."/>
            <person name="Vetter I."/>
            <person name="van Vliet-Reedijk J.C."/>
            <person name="Voet M."/>
            <person name="Volckaert G."/>
            <person name="Vreken P."/>
            <person name="Wang H."/>
            <person name="Warmington J.R."/>
            <person name="von Wettstein D."/>
            <person name="Wicksteed B.L."/>
            <person name="Wilson C."/>
            <person name="Wurst H."/>
            <person name="Xu G."/>
            <person name="Yoshikawa A."/>
            <person name="Zimmermann F.K."/>
            <person name="Sgouros J.G."/>
        </authorList>
    </citation>
    <scope>NUCLEOTIDE SEQUENCE [LARGE SCALE GENOMIC DNA]</scope>
    <source>
        <strain>ATCC 204508 / S288c</strain>
    </source>
</reference>
<reference key="2">
    <citation type="journal article" date="2014" name="G3 (Bethesda)">
        <title>The reference genome sequence of Saccharomyces cerevisiae: Then and now.</title>
        <authorList>
            <person name="Engel S.R."/>
            <person name="Dietrich F.S."/>
            <person name="Fisk D.G."/>
            <person name="Binkley G."/>
            <person name="Balakrishnan R."/>
            <person name="Costanzo M.C."/>
            <person name="Dwight S.S."/>
            <person name="Hitz B.C."/>
            <person name="Karra K."/>
            <person name="Nash R.S."/>
            <person name="Weng S."/>
            <person name="Wong E.D."/>
            <person name="Lloyd P."/>
            <person name="Skrzypek M.S."/>
            <person name="Miyasato S.R."/>
            <person name="Simison M."/>
            <person name="Cherry J.M."/>
        </authorList>
    </citation>
    <scope>GENOME REANNOTATION</scope>
    <source>
        <strain>ATCC 204508 / S288c</strain>
    </source>
</reference>
<proteinExistence type="uncertain"/>
<evidence type="ECO:0000305" key="1"/>
<evidence type="ECO:0000305" key="2">
    <source>
    </source>
</evidence>